<feature type="chain" id="PRO_1000138633" description="Alanine racemase">
    <location>
        <begin position="1"/>
        <end position="359"/>
    </location>
</feature>
<feature type="active site" description="Proton acceptor; specific for D-alanine" evidence="1">
    <location>
        <position position="34"/>
    </location>
</feature>
<feature type="active site" description="Proton acceptor; specific for L-alanine" evidence="1">
    <location>
        <position position="254"/>
    </location>
</feature>
<feature type="binding site" evidence="1">
    <location>
        <position position="129"/>
    </location>
    <ligand>
        <name>substrate</name>
    </ligand>
</feature>
<feature type="binding site" evidence="1">
    <location>
        <position position="302"/>
    </location>
    <ligand>
        <name>substrate</name>
    </ligand>
</feature>
<feature type="modified residue" description="N6-(pyridoxal phosphate)lysine" evidence="1">
    <location>
        <position position="34"/>
    </location>
</feature>
<organism>
    <name type="scientific">Yersinia pestis bv. Antiqua (strain Angola)</name>
    <dbReference type="NCBI Taxonomy" id="349746"/>
    <lineage>
        <taxon>Bacteria</taxon>
        <taxon>Pseudomonadati</taxon>
        <taxon>Pseudomonadota</taxon>
        <taxon>Gammaproteobacteria</taxon>
        <taxon>Enterobacterales</taxon>
        <taxon>Yersiniaceae</taxon>
        <taxon>Yersinia</taxon>
    </lineage>
</organism>
<gene>
    <name type="primary">alr</name>
    <name type="ordered locus">YpAngola_A0754</name>
</gene>
<comment type="function">
    <text evidence="1">Catalyzes the interconversion of L-alanine and D-alanine. May also act on other amino acids.</text>
</comment>
<comment type="catalytic activity">
    <reaction evidence="1">
        <text>L-alanine = D-alanine</text>
        <dbReference type="Rhea" id="RHEA:20249"/>
        <dbReference type="ChEBI" id="CHEBI:57416"/>
        <dbReference type="ChEBI" id="CHEBI:57972"/>
        <dbReference type="EC" id="5.1.1.1"/>
    </reaction>
</comment>
<comment type="cofactor">
    <cofactor evidence="1">
        <name>pyridoxal 5'-phosphate</name>
        <dbReference type="ChEBI" id="CHEBI:597326"/>
    </cofactor>
</comment>
<comment type="pathway">
    <text evidence="1">Amino-acid biosynthesis; D-alanine biosynthesis; D-alanine from L-alanine: step 1/1.</text>
</comment>
<comment type="similarity">
    <text evidence="1">Belongs to the alanine racemase family.</text>
</comment>
<accession>A9QYT2</accession>
<evidence type="ECO:0000255" key="1">
    <source>
        <dbReference type="HAMAP-Rule" id="MF_01201"/>
    </source>
</evidence>
<dbReference type="EC" id="5.1.1.1" evidence="1"/>
<dbReference type="EMBL" id="CP000901">
    <property type="protein sequence ID" value="ABX87064.1"/>
    <property type="molecule type" value="Genomic_DNA"/>
</dbReference>
<dbReference type="RefSeq" id="WP_002209096.1">
    <property type="nucleotide sequence ID" value="NZ_CP009935.1"/>
</dbReference>
<dbReference type="SMR" id="A9QYT2"/>
<dbReference type="GeneID" id="57974284"/>
<dbReference type="KEGG" id="ypg:YpAngola_A0754"/>
<dbReference type="PATRIC" id="fig|349746.12.peg.1700"/>
<dbReference type="UniPathway" id="UPA00042">
    <property type="reaction ID" value="UER00497"/>
</dbReference>
<dbReference type="GO" id="GO:0005829">
    <property type="term" value="C:cytosol"/>
    <property type="evidence" value="ECO:0007669"/>
    <property type="project" value="TreeGrafter"/>
</dbReference>
<dbReference type="GO" id="GO:0008784">
    <property type="term" value="F:alanine racemase activity"/>
    <property type="evidence" value="ECO:0007669"/>
    <property type="project" value="UniProtKB-UniRule"/>
</dbReference>
<dbReference type="GO" id="GO:0030170">
    <property type="term" value="F:pyridoxal phosphate binding"/>
    <property type="evidence" value="ECO:0007669"/>
    <property type="project" value="UniProtKB-UniRule"/>
</dbReference>
<dbReference type="GO" id="GO:0030632">
    <property type="term" value="P:D-alanine biosynthetic process"/>
    <property type="evidence" value="ECO:0007669"/>
    <property type="project" value="UniProtKB-UniRule"/>
</dbReference>
<dbReference type="CDD" id="cd06827">
    <property type="entry name" value="PLPDE_III_AR_proteobact"/>
    <property type="match status" value="1"/>
</dbReference>
<dbReference type="FunFam" id="2.40.37.10:FF:000002">
    <property type="entry name" value="Alanine racemase"/>
    <property type="match status" value="1"/>
</dbReference>
<dbReference type="FunFam" id="3.20.20.10:FF:000002">
    <property type="entry name" value="Alanine racemase"/>
    <property type="match status" value="1"/>
</dbReference>
<dbReference type="Gene3D" id="3.20.20.10">
    <property type="entry name" value="Alanine racemase"/>
    <property type="match status" value="1"/>
</dbReference>
<dbReference type="Gene3D" id="2.40.37.10">
    <property type="entry name" value="Lyase, Ornithine Decarboxylase, Chain A, domain 1"/>
    <property type="match status" value="1"/>
</dbReference>
<dbReference type="HAMAP" id="MF_01201">
    <property type="entry name" value="Ala_racemase"/>
    <property type="match status" value="1"/>
</dbReference>
<dbReference type="InterPro" id="IPR000821">
    <property type="entry name" value="Ala_racemase"/>
</dbReference>
<dbReference type="InterPro" id="IPR009006">
    <property type="entry name" value="Ala_racemase/Decarboxylase_C"/>
</dbReference>
<dbReference type="InterPro" id="IPR011079">
    <property type="entry name" value="Ala_racemase_C"/>
</dbReference>
<dbReference type="InterPro" id="IPR001608">
    <property type="entry name" value="Ala_racemase_N"/>
</dbReference>
<dbReference type="InterPro" id="IPR020622">
    <property type="entry name" value="Ala_racemase_pyridoxalP-BS"/>
</dbReference>
<dbReference type="InterPro" id="IPR029066">
    <property type="entry name" value="PLP-binding_barrel"/>
</dbReference>
<dbReference type="NCBIfam" id="TIGR00492">
    <property type="entry name" value="alr"/>
    <property type="match status" value="1"/>
</dbReference>
<dbReference type="PANTHER" id="PTHR30511">
    <property type="entry name" value="ALANINE RACEMASE"/>
    <property type="match status" value="1"/>
</dbReference>
<dbReference type="PANTHER" id="PTHR30511:SF4">
    <property type="entry name" value="ALANINE RACEMASE, BIOSYNTHETIC"/>
    <property type="match status" value="1"/>
</dbReference>
<dbReference type="Pfam" id="PF00842">
    <property type="entry name" value="Ala_racemase_C"/>
    <property type="match status" value="1"/>
</dbReference>
<dbReference type="Pfam" id="PF01168">
    <property type="entry name" value="Ala_racemase_N"/>
    <property type="match status" value="1"/>
</dbReference>
<dbReference type="PRINTS" id="PR00992">
    <property type="entry name" value="ALARACEMASE"/>
</dbReference>
<dbReference type="SMART" id="SM01005">
    <property type="entry name" value="Ala_racemase_C"/>
    <property type="match status" value="1"/>
</dbReference>
<dbReference type="SUPFAM" id="SSF50621">
    <property type="entry name" value="Alanine racemase C-terminal domain-like"/>
    <property type="match status" value="1"/>
</dbReference>
<dbReference type="SUPFAM" id="SSF51419">
    <property type="entry name" value="PLP-binding barrel"/>
    <property type="match status" value="1"/>
</dbReference>
<dbReference type="PROSITE" id="PS00395">
    <property type="entry name" value="ALANINE_RACEMASE"/>
    <property type="match status" value="1"/>
</dbReference>
<reference key="1">
    <citation type="journal article" date="2010" name="J. Bacteriol.">
        <title>Genome sequence of the deep-rooted Yersinia pestis strain Angola reveals new insights into the evolution and pangenome of the plague bacterium.</title>
        <authorList>
            <person name="Eppinger M."/>
            <person name="Worsham P.L."/>
            <person name="Nikolich M.P."/>
            <person name="Riley D.R."/>
            <person name="Sebastian Y."/>
            <person name="Mou S."/>
            <person name="Achtman M."/>
            <person name="Lindler L.E."/>
            <person name="Ravel J."/>
        </authorList>
    </citation>
    <scope>NUCLEOTIDE SEQUENCE [LARGE SCALE GENOMIC DNA]</scope>
    <source>
        <strain>Angola</strain>
    </source>
</reference>
<keyword id="KW-0413">Isomerase</keyword>
<keyword id="KW-0663">Pyridoxal phosphate</keyword>
<name>ALR_YERPG</name>
<protein>
    <recommendedName>
        <fullName evidence="1">Alanine racemase</fullName>
        <ecNumber evidence="1">5.1.1.1</ecNumber>
    </recommendedName>
</protein>
<proteinExistence type="inferred from homology"/>
<sequence length="359" mass="38731">MKAATAVIDRHALRHNLQQIRRLAPQSRLVAVVKANAYGHGLLAAAHTLQDADCYGVARISEALMLRAGGIVKPILLLEGFFDAEDLPVLVANHIETAVHSLEQLVALEAATLSAPINVWMKLDTGMHRLGVRPDQAEAFYQRLSACRNVIQPVNIMSHFSRADEPEVAATQQQLACFDAFAAGKPGKQSIAASGGILRWPQAHRDWVRPGIVLYGVSPFDAPYGRDFGLLPAMTLKSSLIAVREHKAGESVGYGGTWVSERDTRLGVIAIGYGDGYPRSAPSGTPVWLNGREVSIVGRVSMDMISIDLGPESTDKVGDEALMWGAELPVERVAACTGISAYELITNLTSRVAMEYLGE</sequence>